<organism>
    <name type="scientific">Yersinia pseudotuberculosis serotype O:3 (strain YPIII)</name>
    <dbReference type="NCBI Taxonomy" id="502800"/>
    <lineage>
        <taxon>Bacteria</taxon>
        <taxon>Pseudomonadati</taxon>
        <taxon>Pseudomonadota</taxon>
        <taxon>Gammaproteobacteria</taxon>
        <taxon>Enterobacterales</taxon>
        <taxon>Yersiniaceae</taxon>
        <taxon>Yersinia</taxon>
    </lineage>
</organism>
<reference key="1">
    <citation type="submission" date="2008-02" db="EMBL/GenBank/DDBJ databases">
        <title>Complete sequence of Yersinia pseudotuberculosis YPIII.</title>
        <authorList>
            <consortium name="US DOE Joint Genome Institute"/>
            <person name="Copeland A."/>
            <person name="Lucas S."/>
            <person name="Lapidus A."/>
            <person name="Glavina del Rio T."/>
            <person name="Dalin E."/>
            <person name="Tice H."/>
            <person name="Bruce D."/>
            <person name="Goodwin L."/>
            <person name="Pitluck S."/>
            <person name="Munk A.C."/>
            <person name="Brettin T."/>
            <person name="Detter J.C."/>
            <person name="Han C."/>
            <person name="Tapia R."/>
            <person name="Schmutz J."/>
            <person name="Larimer F."/>
            <person name="Land M."/>
            <person name="Hauser L."/>
            <person name="Challacombe J.F."/>
            <person name="Green L."/>
            <person name="Lindler L.E."/>
            <person name="Nikolich M.P."/>
            <person name="Richardson P."/>
        </authorList>
    </citation>
    <scope>NUCLEOTIDE SEQUENCE [LARGE SCALE GENOMIC DNA]</scope>
    <source>
        <strain>YPIII</strain>
    </source>
</reference>
<gene>
    <name type="ordered locus">YPK_0819</name>
</gene>
<keyword id="KW-0408">Iron</keyword>
<comment type="function">
    <text evidence="1">Could be a mediator in iron transactions between iron acquisition and iron-requiring processes, such as synthesis and/or repair of Fe-S clusters in biosynthetic enzymes.</text>
</comment>
<comment type="subunit">
    <text evidence="1">Monomer.</text>
</comment>
<comment type="similarity">
    <text evidence="1">Belongs to the Fe(2+)-trafficking protein family.</text>
</comment>
<name>FETP_YERPY</name>
<protein>
    <recommendedName>
        <fullName evidence="1">Probable Fe(2+)-trafficking protein</fullName>
    </recommendedName>
</protein>
<evidence type="ECO:0000255" key="1">
    <source>
        <dbReference type="HAMAP-Rule" id="MF_00686"/>
    </source>
</evidence>
<feature type="chain" id="PRO_1000131875" description="Probable Fe(2+)-trafficking protein">
    <location>
        <begin position="1"/>
        <end position="90"/>
    </location>
</feature>
<proteinExistence type="inferred from homology"/>
<sequence length="90" mass="10608">MSRTIFCTFLKKDAEGQDFQLYPGEIGKRIYNEISKEAWSQWITKQTMLINEKKLSMMNIEDRKLLEQEMVNFLFEGQDVHIAGYTPPSK</sequence>
<dbReference type="EMBL" id="CP000950">
    <property type="protein sequence ID" value="ACA67120.1"/>
    <property type="molecule type" value="Genomic_DNA"/>
</dbReference>
<dbReference type="RefSeq" id="WP_002230648.1">
    <property type="nucleotide sequence ID" value="NZ_CP009792.1"/>
</dbReference>
<dbReference type="SMR" id="B1JNM8"/>
<dbReference type="KEGG" id="ypy:YPK_0819"/>
<dbReference type="PATRIC" id="fig|502800.11.peg.1445"/>
<dbReference type="GO" id="GO:0005829">
    <property type="term" value="C:cytosol"/>
    <property type="evidence" value="ECO:0007669"/>
    <property type="project" value="TreeGrafter"/>
</dbReference>
<dbReference type="GO" id="GO:0005506">
    <property type="term" value="F:iron ion binding"/>
    <property type="evidence" value="ECO:0007669"/>
    <property type="project" value="UniProtKB-UniRule"/>
</dbReference>
<dbReference type="GO" id="GO:0034599">
    <property type="term" value="P:cellular response to oxidative stress"/>
    <property type="evidence" value="ECO:0007669"/>
    <property type="project" value="TreeGrafter"/>
</dbReference>
<dbReference type="FunFam" id="1.10.3880.10:FF:000001">
    <property type="entry name" value="Probable Fe(2+)-trafficking protein"/>
    <property type="match status" value="1"/>
</dbReference>
<dbReference type="Gene3D" id="1.10.3880.10">
    <property type="entry name" value="Fe(II) trafficking protein YggX"/>
    <property type="match status" value="1"/>
</dbReference>
<dbReference type="HAMAP" id="MF_00686">
    <property type="entry name" value="Fe_traffic_YggX"/>
    <property type="match status" value="1"/>
</dbReference>
<dbReference type="InterPro" id="IPR007457">
    <property type="entry name" value="Fe_traffick_prot_YggX"/>
</dbReference>
<dbReference type="InterPro" id="IPR036766">
    <property type="entry name" value="Fe_traffick_prot_YggX_sf"/>
</dbReference>
<dbReference type="NCBIfam" id="NF003817">
    <property type="entry name" value="PRK05408.1"/>
    <property type="match status" value="1"/>
</dbReference>
<dbReference type="PANTHER" id="PTHR36965">
    <property type="entry name" value="FE(2+)-TRAFFICKING PROTEIN-RELATED"/>
    <property type="match status" value="1"/>
</dbReference>
<dbReference type="PANTHER" id="PTHR36965:SF1">
    <property type="entry name" value="FE(2+)-TRAFFICKING PROTEIN-RELATED"/>
    <property type="match status" value="1"/>
</dbReference>
<dbReference type="Pfam" id="PF04362">
    <property type="entry name" value="Iron_traffic"/>
    <property type="match status" value="1"/>
</dbReference>
<dbReference type="PIRSF" id="PIRSF029827">
    <property type="entry name" value="Fe_traffic_YggX"/>
    <property type="match status" value="1"/>
</dbReference>
<dbReference type="SUPFAM" id="SSF111148">
    <property type="entry name" value="YggX-like"/>
    <property type="match status" value="1"/>
</dbReference>
<accession>B1JNM8</accession>